<gene>
    <name type="ORF">PP6455</name>
</gene>
<keyword id="KW-1185">Reference proteome</keyword>
<dbReference type="EMBL" id="AF289566">
    <property type="protein sequence ID" value="AAL55750.1"/>
    <property type="molecule type" value="mRNA"/>
</dbReference>
<dbReference type="EMBL" id="AC012617">
    <property type="status" value="NOT_ANNOTATED_CDS"/>
    <property type="molecule type" value="Genomic_DNA"/>
</dbReference>
<dbReference type="EMBL" id="BC045185">
    <property type="status" value="NOT_ANNOTATED_CDS"/>
    <property type="molecule type" value="mRNA"/>
</dbReference>
<dbReference type="iPTMnet" id="Q8WZ26"/>
<dbReference type="PhosphoSitePlus" id="Q8WZ26"/>
<dbReference type="BioMuta" id="PP6455"/>
<dbReference type="ProteomicsDB" id="75206"/>
<dbReference type="neXtProt" id="NX_Q8WZ26"/>
<dbReference type="InParanoid" id="Q8WZ26"/>
<dbReference type="PAN-GO" id="Q8WZ26">
    <property type="GO annotations" value="0 GO annotations based on evolutionary models"/>
</dbReference>
<dbReference type="Pharos" id="Q8WZ26">
    <property type="development level" value="Tdark"/>
</dbReference>
<dbReference type="Proteomes" id="UP000005640">
    <property type="component" value="Unplaced"/>
</dbReference>
<dbReference type="RNAct" id="Q8WZ26">
    <property type="molecule type" value="protein"/>
</dbReference>
<protein>
    <recommendedName>
        <fullName>Putative uncharacterized protein PP6455</fullName>
    </recommendedName>
</protein>
<feature type="chain" id="PRO_0000318914" description="Putative uncharacterized protein PP6455">
    <location>
        <begin position="1"/>
        <end position="134"/>
    </location>
</feature>
<feature type="sequence conflict" description="In Ref. 2; BC045185." evidence="1" ref="2">
    <original>T</original>
    <variation>K</variation>
    <location>
        <position position="19"/>
    </location>
</feature>
<feature type="sequence conflict" description="In Ref. 1; AAL55750 and 2; BC045185." evidence="1" ref="1 2">
    <original>F</original>
    <variation>L</variation>
    <location>
        <position position="40"/>
    </location>
</feature>
<feature type="sequence conflict" description="In Ref. 2; BC045185." evidence="1" ref="2">
    <original>V</original>
    <variation>I</variation>
    <location>
        <position position="52"/>
    </location>
</feature>
<feature type="sequence conflict" description="In Ref. 1; AAL55750." evidence="1" ref="1">
    <original>L</original>
    <variation>V</variation>
    <location>
        <position position="104"/>
    </location>
</feature>
<feature type="sequence conflict" description="In Ref. 2; BC045185." evidence="1" ref="2">
    <original>S</original>
    <variation>R</variation>
    <location>
        <position position="119"/>
    </location>
</feature>
<evidence type="ECO:0000305" key="1"/>
<reference key="1">
    <citation type="journal article" date="2004" name="Proc. Natl. Acad. Sci. U.S.A.">
        <title>Large-scale cDNA transfection screening for genes related to cancer development and progression.</title>
        <authorList>
            <person name="Wan D."/>
            <person name="Gong Y."/>
            <person name="Qin W."/>
            <person name="Zhang P."/>
            <person name="Li J."/>
            <person name="Wei L."/>
            <person name="Zhou X."/>
            <person name="Li H."/>
            <person name="Qiu X."/>
            <person name="Zhong F."/>
            <person name="He L."/>
            <person name="Yu J."/>
            <person name="Yao G."/>
            <person name="Jiang H."/>
            <person name="Qian L."/>
            <person name="Yu Y."/>
            <person name="Shu H."/>
            <person name="Chen X."/>
            <person name="Xu H."/>
            <person name="Guo M."/>
            <person name="Pan Z."/>
            <person name="Chen Y."/>
            <person name="Ge C."/>
            <person name="Yang S."/>
            <person name="Gu J."/>
        </authorList>
    </citation>
    <scope>NUCLEOTIDE SEQUENCE [LARGE SCALE MRNA]</scope>
</reference>
<reference key="2">
    <citation type="journal article" date="2004" name="Nature">
        <title>The DNA sequence and biology of human chromosome 19.</title>
        <authorList>
            <person name="Grimwood J."/>
            <person name="Gordon L.A."/>
            <person name="Olsen A.S."/>
            <person name="Terry A."/>
            <person name="Schmutz J."/>
            <person name="Lamerdin J.E."/>
            <person name="Hellsten U."/>
            <person name="Goodstein D."/>
            <person name="Couronne O."/>
            <person name="Tran-Gyamfi M."/>
            <person name="Aerts A."/>
            <person name="Altherr M."/>
            <person name="Ashworth L."/>
            <person name="Bajorek E."/>
            <person name="Black S."/>
            <person name="Branscomb E."/>
            <person name="Caenepeel S."/>
            <person name="Carrano A.V."/>
            <person name="Caoile C."/>
            <person name="Chan Y.M."/>
            <person name="Christensen M."/>
            <person name="Cleland C.A."/>
            <person name="Copeland A."/>
            <person name="Dalin E."/>
            <person name="Dehal P."/>
            <person name="Denys M."/>
            <person name="Detter J.C."/>
            <person name="Escobar J."/>
            <person name="Flowers D."/>
            <person name="Fotopulos D."/>
            <person name="Garcia C."/>
            <person name="Georgescu A.M."/>
            <person name="Glavina T."/>
            <person name="Gomez M."/>
            <person name="Gonzales E."/>
            <person name="Groza M."/>
            <person name="Hammon N."/>
            <person name="Hawkins T."/>
            <person name="Haydu L."/>
            <person name="Ho I."/>
            <person name="Huang W."/>
            <person name="Israni S."/>
            <person name="Jett J."/>
            <person name="Kadner K."/>
            <person name="Kimball H."/>
            <person name="Kobayashi A."/>
            <person name="Larionov V."/>
            <person name="Leem S.-H."/>
            <person name="Lopez F."/>
            <person name="Lou Y."/>
            <person name="Lowry S."/>
            <person name="Malfatti S."/>
            <person name="Martinez D."/>
            <person name="McCready P.M."/>
            <person name="Medina C."/>
            <person name="Morgan J."/>
            <person name="Nelson K."/>
            <person name="Nolan M."/>
            <person name="Ovcharenko I."/>
            <person name="Pitluck S."/>
            <person name="Pollard M."/>
            <person name="Popkie A.P."/>
            <person name="Predki P."/>
            <person name="Quan G."/>
            <person name="Ramirez L."/>
            <person name="Rash S."/>
            <person name="Retterer J."/>
            <person name="Rodriguez A."/>
            <person name="Rogers S."/>
            <person name="Salamov A."/>
            <person name="Salazar A."/>
            <person name="She X."/>
            <person name="Smith D."/>
            <person name="Slezak T."/>
            <person name="Solovyev V."/>
            <person name="Thayer N."/>
            <person name="Tice H."/>
            <person name="Tsai M."/>
            <person name="Ustaszewska A."/>
            <person name="Vo N."/>
            <person name="Wagner M."/>
            <person name="Wheeler J."/>
            <person name="Wu K."/>
            <person name="Xie G."/>
            <person name="Yang J."/>
            <person name="Dubchak I."/>
            <person name="Furey T.S."/>
            <person name="DeJong P."/>
            <person name="Dickson M."/>
            <person name="Gordon D."/>
            <person name="Eichler E.E."/>
            <person name="Pennacchio L.A."/>
            <person name="Richardson P."/>
            <person name="Stubbs L."/>
            <person name="Rokhsar D.S."/>
            <person name="Myers R.M."/>
            <person name="Rubin E.M."/>
            <person name="Lucas S.M."/>
        </authorList>
    </citation>
    <scope>NUCLEOTIDE SEQUENCE [LARGE SCALE GENOMIC DNA]</scope>
</reference>
<reference key="3">
    <citation type="journal article" date="2004" name="Genome Res.">
        <title>The status, quality, and expansion of the NIH full-length cDNA project: the Mammalian Gene Collection (MGC).</title>
        <authorList>
            <consortium name="The MGC Project Team"/>
        </authorList>
    </citation>
    <scope>NUCLEOTIDE SEQUENCE [LARGE SCALE MRNA]</scope>
    <source>
        <tissue>Testis</tissue>
    </source>
</reference>
<name>YS006_HUMAN</name>
<proteinExistence type="evidence at transcript level"/>
<organism>
    <name type="scientific">Homo sapiens</name>
    <name type="common">Human</name>
    <dbReference type="NCBI Taxonomy" id="9606"/>
    <lineage>
        <taxon>Eukaryota</taxon>
        <taxon>Metazoa</taxon>
        <taxon>Chordata</taxon>
        <taxon>Craniata</taxon>
        <taxon>Vertebrata</taxon>
        <taxon>Euteleostomi</taxon>
        <taxon>Mammalia</taxon>
        <taxon>Eutheria</taxon>
        <taxon>Euarchontoglires</taxon>
        <taxon>Primates</taxon>
        <taxon>Haplorrhini</taxon>
        <taxon>Catarrhini</taxon>
        <taxon>Hominidae</taxon>
        <taxon>Homo</taxon>
    </lineage>
</organism>
<accession>Q8WZ26</accession>
<sequence length="134" mass="14832">MCEQLVCIFTYAYLKINLTKALGHHNPSYPVARAQPQTMFPSASECNAFPRVSKVPNRSGAAETALLVRVLPKPLKSQASLLSLPFIHITEQLSTHICVVLFKLFHVCLFTINNMNDCSMDAAERNAEGGLQLE</sequence>